<protein>
    <recommendedName>
        <fullName>Probable rhamnogalacturonate lyase A</fullName>
        <ecNumber>4.2.2.23</ecNumber>
    </recommendedName>
</protein>
<reference key="1">
    <citation type="journal article" date="2008" name="PLoS Genet.">
        <title>Genomic islands in the pathogenic filamentous fungus Aspergillus fumigatus.</title>
        <authorList>
            <person name="Fedorova N.D."/>
            <person name="Khaldi N."/>
            <person name="Joardar V.S."/>
            <person name="Maiti R."/>
            <person name="Amedeo P."/>
            <person name="Anderson M.J."/>
            <person name="Crabtree J."/>
            <person name="Silva J.C."/>
            <person name="Badger J.H."/>
            <person name="Albarraq A."/>
            <person name="Angiuoli S."/>
            <person name="Bussey H."/>
            <person name="Bowyer P."/>
            <person name="Cotty P.J."/>
            <person name="Dyer P.S."/>
            <person name="Egan A."/>
            <person name="Galens K."/>
            <person name="Fraser-Liggett C.M."/>
            <person name="Haas B.J."/>
            <person name="Inman J.M."/>
            <person name="Kent R."/>
            <person name="Lemieux S."/>
            <person name="Malavazi I."/>
            <person name="Orvis J."/>
            <person name="Roemer T."/>
            <person name="Ronning C.M."/>
            <person name="Sundaram J.P."/>
            <person name="Sutton G."/>
            <person name="Turner G."/>
            <person name="Venter J.C."/>
            <person name="White O.R."/>
            <person name="Whitty B.R."/>
            <person name="Youngman P."/>
            <person name="Wolfe K.H."/>
            <person name="Goldman G.H."/>
            <person name="Wortman J.R."/>
            <person name="Jiang B."/>
            <person name="Denning D.W."/>
            <person name="Nierman W.C."/>
        </authorList>
    </citation>
    <scope>NUCLEOTIDE SEQUENCE [LARGE SCALE GENOMIC DNA]</scope>
    <source>
        <strain>CBS 144.89 / FGSC A1163 / CEA10</strain>
    </source>
</reference>
<accession>B0YEH9</accession>
<comment type="function">
    <text evidence="1">Pectinolytic enzymes consist of four classes of enzymes: pectin lyase, polygalacturonase, pectin methylesterase and rhamnogalacturonase. Degrades the rhamnogalacturonan I (RG-I) backbone of pectin (By similarity).</text>
</comment>
<comment type="catalytic activity">
    <reaction>
        <text>Endotype eliminative cleavage of L-alpha-rhamnopyranosyl-(1-&gt;4)-alpha-D-galactopyranosyluronic acid bonds of rhamnogalacturonan I domains in ramified hairy regions of pectin leaving L-rhamnopyranose at the reducing end and 4-deoxy-4,5-unsaturated D-galactopyranosyluronic acid at the non-reducing end.</text>
        <dbReference type="EC" id="4.2.2.23"/>
    </reaction>
</comment>
<comment type="subcellular location">
    <subcellularLocation>
        <location evidence="1">Secreted</location>
    </subcellularLocation>
</comment>
<comment type="similarity">
    <text evidence="3">Belongs to the polysaccharide lyase 4 family.</text>
</comment>
<dbReference type="EC" id="4.2.2.23"/>
<dbReference type="EMBL" id="DS499603">
    <property type="protein sequence ID" value="EDP47323.1"/>
    <property type="molecule type" value="Genomic_DNA"/>
</dbReference>
<dbReference type="SMR" id="B0YEH9"/>
<dbReference type="GlyCosmos" id="B0YEH9">
    <property type="glycosylation" value="3 sites, No reported glycans"/>
</dbReference>
<dbReference type="EnsemblFungi" id="EDP47323">
    <property type="protein sequence ID" value="EDP47323"/>
    <property type="gene ID" value="AFUB_099240"/>
</dbReference>
<dbReference type="VEuPathDB" id="FungiDB:AFUB_099240"/>
<dbReference type="HOGENOM" id="CLU_037882_1_1_1"/>
<dbReference type="OrthoDB" id="88161at5052"/>
<dbReference type="PhylomeDB" id="B0YEH9"/>
<dbReference type="Proteomes" id="UP000001699">
    <property type="component" value="Unassembled WGS sequence"/>
</dbReference>
<dbReference type="GO" id="GO:0005576">
    <property type="term" value="C:extracellular region"/>
    <property type="evidence" value="ECO:0007669"/>
    <property type="project" value="UniProtKB-SubCell"/>
</dbReference>
<dbReference type="GO" id="GO:0030246">
    <property type="term" value="F:carbohydrate binding"/>
    <property type="evidence" value="ECO:0007669"/>
    <property type="project" value="InterPro"/>
</dbReference>
<dbReference type="GO" id="GO:0102210">
    <property type="term" value="F:rhamnogalacturonan endolyase activity"/>
    <property type="evidence" value="ECO:0007669"/>
    <property type="project" value="UniProtKB-EC"/>
</dbReference>
<dbReference type="GO" id="GO:0071555">
    <property type="term" value="P:cell wall organization"/>
    <property type="evidence" value="ECO:0007669"/>
    <property type="project" value="UniProtKB-KW"/>
</dbReference>
<dbReference type="GO" id="GO:0045490">
    <property type="term" value="P:pectin catabolic process"/>
    <property type="evidence" value="ECO:0007669"/>
    <property type="project" value="TreeGrafter"/>
</dbReference>
<dbReference type="CDD" id="cd10317">
    <property type="entry name" value="RGL4_C"/>
    <property type="match status" value="1"/>
</dbReference>
<dbReference type="CDD" id="cd10316">
    <property type="entry name" value="RGL4_M"/>
    <property type="match status" value="1"/>
</dbReference>
<dbReference type="CDD" id="cd10320">
    <property type="entry name" value="RGL4_N"/>
    <property type="match status" value="1"/>
</dbReference>
<dbReference type="FunFam" id="2.60.120.260:FF:000102">
    <property type="entry name" value="Rhamnogalacturonate lyase A"/>
    <property type="match status" value="1"/>
</dbReference>
<dbReference type="FunFam" id="2.60.40.1120:FF:000017">
    <property type="entry name" value="Rhamnogalacturonate lyase A"/>
    <property type="match status" value="1"/>
</dbReference>
<dbReference type="FunFam" id="2.70.98.10:FF:000020">
    <property type="entry name" value="Rhamnogalacturonate lyase A"/>
    <property type="match status" value="1"/>
</dbReference>
<dbReference type="Gene3D" id="2.70.98.10">
    <property type="match status" value="1"/>
</dbReference>
<dbReference type="Gene3D" id="2.60.40.1120">
    <property type="entry name" value="Carboxypeptidase-like, regulatory domain"/>
    <property type="match status" value="1"/>
</dbReference>
<dbReference type="Gene3D" id="2.60.120.260">
    <property type="entry name" value="Galactose-binding domain-like"/>
    <property type="match status" value="1"/>
</dbReference>
<dbReference type="InterPro" id="IPR013784">
    <property type="entry name" value="Carb-bd-like_fold"/>
</dbReference>
<dbReference type="InterPro" id="IPR011013">
    <property type="entry name" value="Gal_mutarotase_sf_dom"/>
</dbReference>
<dbReference type="InterPro" id="IPR008979">
    <property type="entry name" value="Galactose-bd-like_sf"/>
</dbReference>
<dbReference type="InterPro" id="IPR014718">
    <property type="entry name" value="GH-type_carb-bd"/>
</dbReference>
<dbReference type="InterPro" id="IPR029413">
    <property type="entry name" value="RG-lyase_II"/>
</dbReference>
<dbReference type="InterPro" id="IPR029411">
    <property type="entry name" value="RG-lyase_III"/>
</dbReference>
<dbReference type="InterPro" id="IPR016590">
    <property type="entry name" value="Rhamnogalacturonase_B"/>
</dbReference>
<dbReference type="InterPro" id="IPR015364">
    <property type="entry name" value="RhgB_N"/>
</dbReference>
<dbReference type="PANTHER" id="PTHR36574">
    <property type="entry name" value="RHAMNOGALACTURONATE LYASE-RELATED"/>
    <property type="match status" value="1"/>
</dbReference>
<dbReference type="PANTHER" id="PTHR36574:SF1">
    <property type="entry name" value="RHAMNOGALACTURONATE LYASE-RELATED"/>
    <property type="match status" value="1"/>
</dbReference>
<dbReference type="Pfam" id="PF14683">
    <property type="entry name" value="CBM-like"/>
    <property type="match status" value="1"/>
</dbReference>
<dbReference type="Pfam" id="PF14686">
    <property type="entry name" value="fn3_3"/>
    <property type="match status" value="1"/>
</dbReference>
<dbReference type="Pfam" id="PF09284">
    <property type="entry name" value="RhgB_N"/>
    <property type="match status" value="1"/>
</dbReference>
<dbReference type="PIRSF" id="PIRSF011794">
    <property type="entry name" value="Rhamnogalacturonase_B"/>
    <property type="match status" value="1"/>
</dbReference>
<dbReference type="SUPFAM" id="SSF74650">
    <property type="entry name" value="Galactose mutarotase-like"/>
    <property type="match status" value="1"/>
</dbReference>
<dbReference type="SUPFAM" id="SSF49785">
    <property type="entry name" value="Galactose-binding domain-like"/>
    <property type="match status" value="1"/>
</dbReference>
<dbReference type="SUPFAM" id="SSF49452">
    <property type="entry name" value="Starch-binding domain-like"/>
    <property type="match status" value="1"/>
</dbReference>
<sequence>MLSKATLLLFLPSWARVTYAAFGITTTSSSYVIDANSPNPLKFTVNRSNCDITSINFYGAELQYQGTGSHIGSGLGSASVSATQSGDYIKVTCSTSTLTHYFVVHNGDPIIHMATYITAEPSIGELRFIARLNNELLPNEEPFGEVSNTSGGTAIEGSDVFLVNGQTRSKFYSSERFIDDHRHCVSGSAHRVCMILNQYESSSGGPFHRDINTNNGGQYNALYWYMNSGHVQTEANRMGLHGPYSMYFSRSGTPGTNIDTSFFANLDIQGYVPDSARGKVSGKASGADSTFKWVVHWYNDEAQYWTYTASDGSFTSPAMKPGTYTMVYYQGEYKVASTSVSVSAGSTTTKNISGSVTTGKTIFKIGEWDGQPTGFRNAANQLRMHPSDSRMSSWGPLTYTVGSSSLSDFPMAIFKSVNSPVTIKFTASSSQTGAATLRIGTTLSFAGGRPQVTVNSWTGPIPSAPKDLNSRGVTRGAYRGLGEVYDVAIPAGTIVAGTNTITISVVSGSSGDAFLSPNFIFDCVELFQ</sequence>
<organism>
    <name type="scientific">Aspergillus fumigatus (strain CBS 144.89 / FGSC A1163 / CEA10)</name>
    <name type="common">Neosartorya fumigata</name>
    <dbReference type="NCBI Taxonomy" id="451804"/>
    <lineage>
        <taxon>Eukaryota</taxon>
        <taxon>Fungi</taxon>
        <taxon>Dikarya</taxon>
        <taxon>Ascomycota</taxon>
        <taxon>Pezizomycotina</taxon>
        <taxon>Eurotiomycetes</taxon>
        <taxon>Eurotiomycetidae</taxon>
        <taxon>Eurotiales</taxon>
        <taxon>Aspergillaceae</taxon>
        <taxon>Aspergillus</taxon>
        <taxon>Aspergillus subgen. Fumigati</taxon>
    </lineage>
</organism>
<evidence type="ECO:0000250" key="1"/>
<evidence type="ECO:0000255" key="2"/>
<evidence type="ECO:0000305" key="3"/>
<feature type="signal peptide" evidence="2">
    <location>
        <begin position="1"/>
        <end position="20"/>
    </location>
</feature>
<feature type="chain" id="PRO_0000394365" description="Probable rhamnogalacturonate lyase A">
    <location>
        <begin position="21"/>
        <end position="528"/>
    </location>
</feature>
<feature type="glycosylation site" description="N-linked (GlcNAc...) asparagine" evidence="2">
    <location>
        <position position="46"/>
    </location>
</feature>
<feature type="glycosylation site" description="N-linked (GlcNAc...) asparagine" evidence="2">
    <location>
        <position position="148"/>
    </location>
</feature>
<feature type="glycosylation site" description="N-linked (GlcNAc...) asparagine" evidence="2">
    <location>
        <position position="351"/>
    </location>
</feature>
<feature type="disulfide bond" evidence="1">
    <location>
        <begin position="50"/>
        <end position="93"/>
    </location>
</feature>
<feature type="disulfide bond" evidence="1">
    <location>
        <begin position="184"/>
        <end position="193"/>
    </location>
</feature>
<proteinExistence type="inferred from homology"/>
<name>RGLA_ASPFC</name>
<keyword id="KW-0119">Carbohydrate metabolism</keyword>
<keyword id="KW-0961">Cell wall biogenesis/degradation</keyword>
<keyword id="KW-1015">Disulfide bond</keyword>
<keyword id="KW-0325">Glycoprotein</keyword>
<keyword id="KW-0456">Lyase</keyword>
<keyword id="KW-0624">Polysaccharide degradation</keyword>
<keyword id="KW-0964">Secreted</keyword>
<keyword id="KW-0732">Signal</keyword>
<gene>
    <name type="primary">rglA</name>
    <name type="ORF">AFUB_099240</name>
</gene>